<accession>A9KND1</accession>
<comment type="function">
    <text evidence="1">Probably deamidates glutamine residues to glutamate on methyl-accepting chemotaxis receptors (MCPs), playing an important role in chemotaxis.</text>
</comment>
<comment type="catalytic activity">
    <reaction evidence="1">
        <text>L-glutaminyl-[protein] + H2O = L-glutamyl-[protein] + NH4(+)</text>
        <dbReference type="Rhea" id="RHEA:16441"/>
        <dbReference type="Rhea" id="RHEA-COMP:10207"/>
        <dbReference type="Rhea" id="RHEA-COMP:10208"/>
        <dbReference type="ChEBI" id="CHEBI:15377"/>
        <dbReference type="ChEBI" id="CHEBI:28938"/>
        <dbReference type="ChEBI" id="CHEBI:29973"/>
        <dbReference type="ChEBI" id="CHEBI:30011"/>
        <dbReference type="EC" id="3.5.1.44"/>
    </reaction>
</comment>
<comment type="similarity">
    <text evidence="1">Belongs to the CheD family.</text>
</comment>
<gene>
    <name evidence="1" type="primary">cheD</name>
    <name type="ordered locus">Cphy_2687</name>
</gene>
<dbReference type="EC" id="3.5.1.44" evidence="1"/>
<dbReference type="EMBL" id="CP000885">
    <property type="protein sequence ID" value="ABX43048.1"/>
    <property type="molecule type" value="Genomic_DNA"/>
</dbReference>
<dbReference type="RefSeq" id="WP_012200700.1">
    <property type="nucleotide sequence ID" value="NC_010001.1"/>
</dbReference>
<dbReference type="SMR" id="A9KND1"/>
<dbReference type="STRING" id="357809.Cphy_2687"/>
<dbReference type="KEGG" id="cpy:Cphy_2687"/>
<dbReference type="eggNOG" id="COG1871">
    <property type="taxonomic scope" value="Bacteria"/>
</dbReference>
<dbReference type="HOGENOM" id="CLU_087854_2_0_9"/>
<dbReference type="OrthoDB" id="9807202at2"/>
<dbReference type="Proteomes" id="UP000000370">
    <property type="component" value="Chromosome"/>
</dbReference>
<dbReference type="GO" id="GO:0050568">
    <property type="term" value="F:protein-glutamine glutaminase activity"/>
    <property type="evidence" value="ECO:0007669"/>
    <property type="project" value="UniProtKB-UniRule"/>
</dbReference>
<dbReference type="GO" id="GO:0006935">
    <property type="term" value="P:chemotaxis"/>
    <property type="evidence" value="ECO:0007669"/>
    <property type="project" value="UniProtKB-UniRule"/>
</dbReference>
<dbReference type="CDD" id="cd16352">
    <property type="entry name" value="CheD"/>
    <property type="match status" value="1"/>
</dbReference>
<dbReference type="Gene3D" id="3.30.1330.200">
    <property type="match status" value="1"/>
</dbReference>
<dbReference type="HAMAP" id="MF_01440">
    <property type="entry name" value="CheD"/>
    <property type="match status" value="1"/>
</dbReference>
<dbReference type="InterPro" id="IPR038592">
    <property type="entry name" value="CheD-like_sf"/>
</dbReference>
<dbReference type="InterPro" id="IPR005659">
    <property type="entry name" value="Chemorcpt_Glu_NH3ase_CheD"/>
</dbReference>
<dbReference type="InterPro" id="IPR011324">
    <property type="entry name" value="Cytotoxic_necrot_fac-like_cat"/>
</dbReference>
<dbReference type="PANTHER" id="PTHR35147">
    <property type="entry name" value="CHEMORECEPTOR GLUTAMINE DEAMIDASE CHED-RELATED"/>
    <property type="match status" value="1"/>
</dbReference>
<dbReference type="PANTHER" id="PTHR35147:SF1">
    <property type="entry name" value="CHEMORECEPTOR GLUTAMINE DEAMIDASE CHED-RELATED"/>
    <property type="match status" value="1"/>
</dbReference>
<dbReference type="Pfam" id="PF03975">
    <property type="entry name" value="CheD"/>
    <property type="match status" value="1"/>
</dbReference>
<dbReference type="SUPFAM" id="SSF64438">
    <property type="entry name" value="CNF1/YfiH-like putative cysteine hydrolases"/>
    <property type="match status" value="1"/>
</dbReference>
<sequence>MGEMIKVGMADMNVCKPPDSITTLGLGSCVGIVLYDPGKKVSGMVHVMLPDSTKIKNNENIAKFADTGIDELVRRLLVLGATRSSLVAKIAGGAQMFAFSSNNDMLRVGERNVEATKEKLNSLRIPILAQDTGLNYGRTIEFNPESSELLIKSVGKPQKKI</sequence>
<keyword id="KW-0145">Chemotaxis</keyword>
<keyword id="KW-0378">Hydrolase</keyword>
<keyword id="KW-1185">Reference proteome</keyword>
<feature type="chain" id="PRO_1000184924" description="Probable chemoreceptor glutamine deamidase CheD">
    <location>
        <begin position="1"/>
        <end position="161"/>
    </location>
</feature>
<reference key="1">
    <citation type="submission" date="2007-11" db="EMBL/GenBank/DDBJ databases">
        <title>Complete genome sequence of Clostridium phytofermentans ISDg.</title>
        <authorList>
            <person name="Leschine S.B."/>
            <person name="Warnick T.A."/>
            <person name="Blanchard J.L."/>
            <person name="Schnell D.J."/>
            <person name="Petit E.L."/>
            <person name="LaTouf W.G."/>
            <person name="Copeland A."/>
            <person name="Lucas S."/>
            <person name="Lapidus A."/>
            <person name="Barry K."/>
            <person name="Glavina del Rio T."/>
            <person name="Dalin E."/>
            <person name="Tice H."/>
            <person name="Pitluck S."/>
            <person name="Kiss H."/>
            <person name="Brettin T."/>
            <person name="Bruce D."/>
            <person name="Detter J.C."/>
            <person name="Han C."/>
            <person name="Kuske C."/>
            <person name="Schmutz J."/>
            <person name="Larimer F."/>
            <person name="Land M."/>
            <person name="Hauser L."/>
            <person name="Kyrpides N."/>
            <person name="Kim E.A."/>
            <person name="Richardson P."/>
        </authorList>
    </citation>
    <scope>NUCLEOTIDE SEQUENCE [LARGE SCALE GENOMIC DNA]</scope>
    <source>
        <strain>ATCC 700394 / DSM 18823 / ISDg</strain>
    </source>
</reference>
<name>CHED_LACP7</name>
<evidence type="ECO:0000255" key="1">
    <source>
        <dbReference type="HAMAP-Rule" id="MF_01440"/>
    </source>
</evidence>
<proteinExistence type="inferred from homology"/>
<protein>
    <recommendedName>
        <fullName evidence="1">Probable chemoreceptor glutamine deamidase CheD</fullName>
        <ecNumber evidence="1">3.5.1.44</ecNumber>
    </recommendedName>
</protein>
<organism>
    <name type="scientific">Lachnoclostridium phytofermentans (strain ATCC 700394 / DSM 18823 / ISDg)</name>
    <name type="common">Clostridium phytofermentans</name>
    <dbReference type="NCBI Taxonomy" id="357809"/>
    <lineage>
        <taxon>Bacteria</taxon>
        <taxon>Bacillati</taxon>
        <taxon>Bacillota</taxon>
        <taxon>Clostridia</taxon>
        <taxon>Lachnospirales</taxon>
        <taxon>Lachnospiraceae</taxon>
    </lineage>
</organism>